<proteinExistence type="inferred from homology"/>
<accession>A5IKT2</accession>
<organism>
    <name type="scientific">Thermotoga petrophila (strain ATCC BAA-488 / DSM 13995 / JCM 10881 / RKU-1)</name>
    <dbReference type="NCBI Taxonomy" id="390874"/>
    <lineage>
        <taxon>Bacteria</taxon>
        <taxon>Thermotogati</taxon>
        <taxon>Thermotogota</taxon>
        <taxon>Thermotogae</taxon>
        <taxon>Thermotogales</taxon>
        <taxon>Thermotogaceae</taxon>
        <taxon>Thermotoga</taxon>
    </lineage>
</organism>
<sequence>MVRVKICGITNLEDALFSVESGADAVGFVFYPKSKRYISPEDARRISVELPPFVFRVGVFVNEEPEKILDVASYVQLNAVQLHGEEPIELCRKIAERILVIKAVGISNERDIERALNYREFPVLLDTKTPEYGGSGKTFDWSLILPYRDQFRYLVLSGGLNPDNVRSAIDMVRPFAVDVSSGVEAFPGKKDHDSIKTFIKNAKGL</sequence>
<comment type="catalytic activity">
    <reaction evidence="1">
        <text>N-(5-phospho-beta-D-ribosyl)anthranilate = 1-(2-carboxyphenylamino)-1-deoxy-D-ribulose 5-phosphate</text>
        <dbReference type="Rhea" id="RHEA:21540"/>
        <dbReference type="ChEBI" id="CHEBI:18277"/>
        <dbReference type="ChEBI" id="CHEBI:58613"/>
        <dbReference type="EC" id="5.3.1.24"/>
    </reaction>
</comment>
<comment type="pathway">
    <text evidence="1">Amino-acid biosynthesis; L-tryptophan biosynthesis; L-tryptophan from chorismate: step 3/5.</text>
</comment>
<comment type="similarity">
    <text evidence="1">Belongs to the TrpF family.</text>
</comment>
<keyword id="KW-0028">Amino-acid biosynthesis</keyword>
<keyword id="KW-0057">Aromatic amino acid biosynthesis</keyword>
<keyword id="KW-0413">Isomerase</keyword>
<keyword id="KW-0822">Tryptophan biosynthesis</keyword>
<protein>
    <recommendedName>
        <fullName evidence="1">N-(5'-phosphoribosyl)anthranilate isomerase</fullName>
        <shortName evidence="1">PRAI</shortName>
        <ecNumber evidence="1">5.3.1.24</ecNumber>
    </recommendedName>
</protein>
<gene>
    <name evidence="1" type="primary">trpF</name>
    <name type="ordered locus">Tpet_0786</name>
</gene>
<feature type="chain" id="PRO_1000018645" description="N-(5'-phosphoribosyl)anthranilate isomerase">
    <location>
        <begin position="1"/>
        <end position="205"/>
    </location>
</feature>
<evidence type="ECO:0000255" key="1">
    <source>
        <dbReference type="HAMAP-Rule" id="MF_00135"/>
    </source>
</evidence>
<dbReference type="EC" id="5.3.1.24" evidence="1"/>
<dbReference type="EMBL" id="CP000702">
    <property type="protein sequence ID" value="ABQ46805.1"/>
    <property type="molecule type" value="Genomic_DNA"/>
</dbReference>
<dbReference type="RefSeq" id="WP_011943373.1">
    <property type="nucleotide sequence ID" value="NC_009486.1"/>
</dbReference>
<dbReference type="SMR" id="A5IKT2"/>
<dbReference type="STRING" id="390874.Tpet_0786"/>
<dbReference type="KEGG" id="tpt:Tpet_0786"/>
<dbReference type="eggNOG" id="COG0135">
    <property type="taxonomic scope" value="Bacteria"/>
</dbReference>
<dbReference type="HOGENOM" id="CLU_076364_2_0_0"/>
<dbReference type="UniPathway" id="UPA00035">
    <property type="reaction ID" value="UER00042"/>
</dbReference>
<dbReference type="Proteomes" id="UP000006558">
    <property type="component" value="Chromosome"/>
</dbReference>
<dbReference type="GO" id="GO:0004640">
    <property type="term" value="F:phosphoribosylanthranilate isomerase activity"/>
    <property type="evidence" value="ECO:0007669"/>
    <property type="project" value="UniProtKB-UniRule"/>
</dbReference>
<dbReference type="GO" id="GO:0000162">
    <property type="term" value="P:L-tryptophan biosynthetic process"/>
    <property type="evidence" value="ECO:0007669"/>
    <property type="project" value="UniProtKB-UniRule"/>
</dbReference>
<dbReference type="CDD" id="cd00405">
    <property type="entry name" value="PRAI"/>
    <property type="match status" value="1"/>
</dbReference>
<dbReference type="FunFam" id="3.20.20.70:FF:000075">
    <property type="entry name" value="Tryptophan biosynthesis protein TRP1"/>
    <property type="match status" value="1"/>
</dbReference>
<dbReference type="Gene3D" id="3.20.20.70">
    <property type="entry name" value="Aldolase class I"/>
    <property type="match status" value="1"/>
</dbReference>
<dbReference type="HAMAP" id="MF_00135">
    <property type="entry name" value="PRAI"/>
    <property type="match status" value="1"/>
</dbReference>
<dbReference type="InterPro" id="IPR013785">
    <property type="entry name" value="Aldolase_TIM"/>
</dbReference>
<dbReference type="InterPro" id="IPR001240">
    <property type="entry name" value="PRAI_dom"/>
</dbReference>
<dbReference type="InterPro" id="IPR011060">
    <property type="entry name" value="RibuloseP-bd_barrel"/>
</dbReference>
<dbReference type="InterPro" id="IPR044643">
    <property type="entry name" value="TrpF_fam"/>
</dbReference>
<dbReference type="NCBIfam" id="NF002298">
    <property type="entry name" value="PRK01222.1-4"/>
    <property type="match status" value="1"/>
</dbReference>
<dbReference type="PANTHER" id="PTHR42894">
    <property type="entry name" value="N-(5'-PHOSPHORIBOSYL)ANTHRANILATE ISOMERASE"/>
    <property type="match status" value="1"/>
</dbReference>
<dbReference type="PANTHER" id="PTHR42894:SF1">
    <property type="entry name" value="N-(5'-PHOSPHORIBOSYL)ANTHRANILATE ISOMERASE"/>
    <property type="match status" value="1"/>
</dbReference>
<dbReference type="Pfam" id="PF00697">
    <property type="entry name" value="PRAI"/>
    <property type="match status" value="1"/>
</dbReference>
<dbReference type="SUPFAM" id="SSF51366">
    <property type="entry name" value="Ribulose-phoshate binding barrel"/>
    <property type="match status" value="1"/>
</dbReference>
<name>TRPF_THEP1</name>
<reference key="1">
    <citation type="submission" date="2007-05" db="EMBL/GenBank/DDBJ databases">
        <title>Complete sequence of Thermotoga petrophila RKU-1.</title>
        <authorList>
            <consortium name="US DOE Joint Genome Institute"/>
            <person name="Copeland A."/>
            <person name="Lucas S."/>
            <person name="Lapidus A."/>
            <person name="Barry K."/>
            <person name="Glavina del Rio T."/>
            <person name="Dalin E."/>
            <person name="Tice H."/>
            <person name="Pitluck S."/>
            <person name="Sims D."/>
            <person name="Brettin T."/>
            <person name="Bruce D."/>
            <person name="Detter J.C."/>
            <person name="Han C."/>
            <person name="Tapia R."/>
            <person name="Schmutz J."/>
            <person name="Larimer F."/>
            <person name="Land M."/>
            <person name="Hauser L."/>
            <person name="Kyrpides N."/>
            <person name="Mikhailova N."/>
            <person name="Nelson K."/>
            <person name="Gogarten J.P."/>
            <person name="Noll K."/>
            <person name="Richardson P."/>
        </authorList>
    </citation>
    <scope>NUCLEOTIDE SEQUENCE [LARGE SCALE GENOMIC DNA]</scope>
    <source>
        <strain>ATCC BAA-488 / DSM 13995 / JCM 10881 / RKU-1</strain>
    </source>
</reference>